<dbReference type="EC" id="4.1.3.6"/>
<dbReference type="EC" id="4.1.3.34"/>
<dbReference type="EMBL" id="L42023">
    <property type="protein sequence ID" value="AAC21701.1"/>
    <property type="molecule type" value="Genomic_DNA"/>
</dbReference>
<dbReference type="PIR" id="D64043">
    <property type="entry name" value="D64043"/>
</dbReference>
<dbReference type="RefSeq" id="NP_438196.2">
    <property type="nucleotide sequence ID" value="NC_000907.1"/>
</dbReference>
<dbReference type="SMR" id="P44460"/>
<dbReference type="STRING" id="71421.HI_0023"/>
<dbReference type="EnsemblBacteria" id="AAC21701">
    <property type="protein sequence ID" value="AAC21701"/>
    <property type="gene ID" value="HI_0023"/>
</dbReference>
<dbReference type="KEGG" id="hin:HI_0023"/>
<dbReference type="PATRIC" id="fig|71421.8.peg.23"/>
<dbReference type="eggNOG" id="COG2301">
    <property type="taxonomic scope" value="Bacteria"/>
</dbReference>
<dbReference type="HOGENOM" id="CLU_044864_0_0_6"/>
<dbReference type="OrthoDB" id="6831788at2"/>
<dbReference type="PhylomeDB" id="P44460"/>
<dbReference type="Proteomes" id="UP000000579">
    <property type="component" value="Chromosome"/>
</dbReference>
<dbReference type="GO" id="GO:0009346">
    <property type="term" value="C:ATP-independent citrate lyase complex"/>
    <property type="evidence" value="ECO:0007669"/>
    <property type="project" value="InterPro"/>
</dbReference>
<dbReference type="GO" id="GO:0005737">
    <property type="term" value="C:cytoplasm"/>
    <property type="evidence" value="ECO:0007669"/>
    <property type="project" value="UniProtKB-SubCell"/>
</dbReference>
<dbReference type="GO" id="GO:0008815">
    <property type="term" value="F:citrate (pro-3S)-lyase activity"/>
    <property type="evidence" value="ECO:0007669"/>
    <property type="project" value="UniProtKB-EC"/>
</dbReference>
<dbReference type="GO" id="GO:0008816">
    <property type="term" value="F:citryl-CoA lyase activity"/>
    <property type="evidence" value="ECO:0007669"/>
    <property type="project" value="UniProtKB-EC"/>
</dbReference>
<dbReference type="GO" id="GO:0000287">
    <property type="term" value="F:magnesium ion binding"/>
    <property type="evidence" value="ECO:0000318"/>
    <property type="project" value="GO_Central"/>
</dbReference>
<dbReference type="GO" id="GO:0006084">
    <property type="term" value="P:acetyl-CoA metabolic process"/>
    <property type="evidence" value="ECO:0007669"/>
    <property type="project" value="InterPro"/>
</dbReference>
<dbReference type="GO" id="GO:0006107">
    <property type="term" value="P:oxaloacetate metabolic process"/>
    <property type="evidence" value="ECO:0000318"/>
    <property type="project" value="GO_Central"/>
</dbReference>
<dbReference type="FunFam" id="3.20.20.60:FF:000008">
    <property type="entry name" value="Citrate (Pro-3S)-lyase subunit beta"/>
    <property type="match status" value="1"/>
</dbReference>
<dbReference type="Gene3D" id="3.20.20.60">
    <property type="entry name" value="Phosphoenolpyruvate-binding domains"/>
    <property type="match status" value="1"/>
</dbReference>
<dbReference type="InterPro" id="IPR005000">
    <property type="entry name" value="Aldolase/citrate-lyase_domain"/>
</dbReference>
<dbReference type="InterPro" id="IPR011206">
    <property type="entry name" value="Citrate_lyase_beta/mcl1/mcl2"/>
</dbReference>
<dbReference type="InterPro" id="IPR006475">
    <property type="entry name" value="Citrate_lyase_beta_bac"/>
</dbReference>
<dbReference type="InterPro" id="IPR015813">
    <property type="entry name" value="Pyrv/PenolPyrv_kinase-like_dom"/>
</dbReference>
<dbReference type="InterPro" id="IPR040442">
    <property type="entry name" value="Pyrv_kinase-like_dom_sf"/>
</dbReference>
<dbReference type="NCBIfam" id="TIGR01588">
    <property type="entry name" value="citE"/>
    <property type="match status" value="1"/>
</dbReference>
<dbReference type="PANTHER" id="PTHR32308:SF10">
    <property type="entry name" value="CITRATE LYASE SUBUNIT BETA"/>
    <property type="match status" value="1"/>
</dbReference>
<dbReference type="PANTHER" id="PTHR32308">
    <property type="entry name" value="LYASE BETA SUBUNIT, PUTATIVE (AFU_ORTHOLOGUE AFUA_4G13030)-RELATED"/>
    <property type="match status" value="1"/>
</dbReference>
<dbReference type="Pfam" id="PF03328">
    <property type="entry name" value="HpcH_HpaI"/>
    <property type="match status" value="1"/>
</dbReference>
<dbReference type="PIRSF" id="PIRSF015582">
    <property type="entry name" value="Cit_lyase_B"/>
    <property type="match status" value="1"/>
</dbReference>
<dbReference type="SUPFAM" id="SSF51621">
    <property type="entry name" value="Phosphoenolpyruvate/pyruvate domain"/>
    <property type="match status" value="1"/>
</dbReference>
<gene>
    <name type="primary">citE</name>
    <name type="ordered locus">HI_0023</name>
</gene>
<comment type="function">
    <text evidence="1">Represents a citryl-ACP lyase.</text>
</comment>
<comment type="catalytic activity">
    <reaction>
        <text>citrate = oxaloacetate + acetate</text>
        <dbReference type="Rhea" id="RHEA:10760"/>
        <dbReference type="ChEBI" id="CHEBI:16452"/>
        <dbReference type="ChEBI" id="CHEBI:16947"/>
        <dbReference type="ChEBI" id="CHEBI:30089"/>
        <dbReference type="EC" id="4.1.3.6"/>
    </reaction>
</comment>
<comment type="catalytic activity">
    <reaction>
        <text>(3S)-citryl-CoA = oxaloacetate + acetyl-CoA</text>
        <dbReference type="Rhea" id="RHEA:20812"/>
        <dbReference type="ChEBI" id="CHEBI:16452"/>
        <dbReference type="ChEBI" id="CHEBI:57288"/>
        <dbReference type="ChEBI" id="CHEBI:57321"/>
        <dbReference type="EC" id="4.1.3.34"/>
    </reaction>
</comment>
<comment type="cofactor">
    <cofactor evidence="1">
        <name>Mg(2+)</name>
        <dbReference type="ChEBI" id="CHEBI:18420"/>
    </cofactor>
    <text evidence="1">Binds 1 Mg(2+) ion per subunit.</text>
</comment>
<comment type="subunit">
    <text evidence="1">Oligomer with a subunit composition of (alpha,beta,gamma)6.</text>
</comment>
<comment type="subcellular location">
    <subcellularLocation>
        <location>Cytoplasm</location>
    </subcellularLocation>
</comment>
<comment type="similarity">
    <text evidence="2">Belongs to the HpcH/HpaI aldolase family. Citrate lyase beta subunit subfamily.</text>
</comment>
<name>CITE_HAEIN</name>
<proteinExistence type="inferred from homology"/>
<sequence length="291" mass="31855">MKLRRSMLFVPGSNAAMLSNSFIYKPDSIMFDLEDAVALKEKDSARLLVAHALQHPLYKEIETVVRVNPLDSEFGLLDLNSVVRAGVDVVRMPKTESAQDVLDMDHAITEIEKACGREAGSTKMLAAIESPLGITQANQIAFASKRLIGIALGAEDYVRNLKTERSPEGIELLFARCSILQAARAAGIQAFDTVYSNANNEEGFLKEAALIKQLGFDGKSLINPRQIELLHNLFAPTQKDVEQAKRIIEAAVEAERQGAGVVSLNGKMIDAPIIDRAKLVLERAKSGIREE</sequence>
<accession>P44460</accession>
<feature type="chain" id="PRO_0000089758" description="Citrate lyase subunit beta">
    <location>
        <begin position="1"/>
        <end position="291"/>
    </location>
</feature>
<feature type="binding site" evidence="1">
    <location>
        <position position="66"/>
    </location>
    <ligand>
        <name>substrate</name>
    </ligand>
</feature>
<feature type="binding site" evidence="1">
    <location>
        <position position="129"/>
    </location>
    <ligand>
        <name>Mg(2+)</name>
        <dbReference type="ChEBI" id="CHEBI:18420"/>
    </ligand>
</feature>
<feature type="binding site" evidence="1">
    <location>
        <position position="129"/>
    </location>
    <ligand>
        <name>substrate</name>
    </ligand>
</feature>
<feature type="binding site" evidence="1">
    <location>
        <position position="156"/>
    </location>
    <ligand>
        <name>Mg(2+)</name>
        <dbReference type="ChEBI" id="CHEBI:18420"/>
    </ligand>
</feature>
<keyword id="KW-0963">Cytoplasm</keyword>
<keyword id="KW-0456">Lyase</keyword>
<keyword id="KW-0460">Magnesium</keyword>
<keyword id="KW-0479">Metal-binding</keyword>
<keyword id="KW-1185">Reference proteome</keyword>
<organism>
    <name type="scientific">Haemophilus influenzae (strain ATCC 51907 / DSM 11121 / KW20 / Rd)</name>
    <dbReference type="NCBI Taxonomy" id="71421"/>
    <lineage>
        <taxon>Bacteria</taxon>
        <taxon>Pseudomonadati</taxon>
        <taxon>Pseudomonadota</taxon>
        <taxon>Gammaproteobacteria</taxon>
        <taxon>Pasteurellales</taxon>
        <taxon>Pasteurellaceae</taxon>
        <taxon>Haemophilus</taxon>
    </lineage>
</organism>
<reference key="1">
    <citation type="journal article" date="1995" name="Science">
        <title>Whole-genome random sequencing and assembly of Haemophilus influenzae Rd.</title>
        <authorList>
            <person name="Fleischmann R.D."/>
            <person name="Adams M.D."/>
            <person name="White O."/>
            <person name="Clayton R.A."/>
            <person name="Kirkness E.F."/>
            <person name="Kerlavage A.R."/>
            <person name="Bult C.J."/>
            <person name="Tomb J.-F."/>
            <person name="Dougherty B.A."/>
            <person name="Merrick J.M."/>
            <person name="McKenney K."/>
            <person name="Sutton G.G."/>
            <person name="FitzHugh W."/>
            <person name="Fields C.A."/>
            <person name="Gocayne J.D."/>
            <person name="Scott J.D."/>
            <person name="Shirley R."/>
            <person name="Liu L.-I."/>
            <person name="Glodek A."/>
            <person name="Kelley J.M."/>
            <person name="Weidman J.F."/>
            <person name="Phillips C.A."/>
            <person name="Spriggs T."/>
            <person name="Hedblom E."/>
            <person name="Cotton M.D."/>
            <person name="Utterback T.R."/>
            <person name="Hanna M.C."/>
            <person name="Nguyen D.T."/>
            <person name="Saudek D.M."/>
            <person name="Brandon R.C."/>
            <person name="Fine L.D."/>
            <person name="Fritchman J.L."/>
            <person name="Fuhrmann J.L."/>
            <person name="Geoghagen N.S.M."/>
            <person name="Gnehm C.L."/>
            <person name="McDonald L.A."/>
            <person name="Small K.V."/>
            <person name="Fraser C.M."/>
            <person name="Smith H.O."/>
            <person name="Venter J.C."/>
        </authorList>
    </citation>
    <scope>NUCLEOTIDE SEQUENCE [LARGE SCALE GENOMIC DNA]</scope>
    <source>
        <strain>ATCC 51907 / DSM 11121 / KW20 / Rd</strain>
    </source>
</reference>
<protein>
    <recommendedName>
        <fullName>Citrate lyase subunit beta</fullName>
        <shortName>Citrase beta chain</shortName>
        <ecNumber>4.1.3.6</ecNumber>
    </recommendedName>
    <alternativeName>
        <fullName>Citrate (pro-3S)-lyase subunit beta</fullName>
    </alternativeName>
    <alternativeName>
        <fullName>Citryl-CoA lyase subunit</fullName>
        <ecNumber>4.1.3.34</ecNumber>
    </alternativeName>
</protein>
<evidence type="ECO:0000250" key="1"/>
<evidence type="ECO:0000305" key="2"/>